<gene>
    <name evidence="1" type="primary">apt</name>
    <name type="ordered locus">Sputcn32_2303</name>
</gene>
<feature type="chain" id="PRO_0000321406" description="Adenine phosphoribosyltransferase">
    <location>
        <begin position="1"/>
        <end position="184"/>
    </location>
</feature>
<evidence type="ECO:0000255" key="1">
    <source>
        <dbReference type="HAMAP-Rule" id="MF_00004"/>
    </source>
</evidence>
<name>APT_SHEPC</name>
<accession>A4Y7U1</accession>
<keyword id="KW-0963">Cytoplasm</keyword>
<keyword id="KW-0328">Glycosyltransferase</keyword>
<keyword id="KW-0660">Purine salvage</keyword>
<keyword id="KW-0808">Transferase</keyword>
<proteinExistence type="inferred from homology"/>
<organism>
    <name type="scientific">Shewanella putrefaciens (strain CN-32 / ATCC BAA-453)</name>
    <dbReference type="NCBI Taxonomy" id="319224"/>
    <lineage>
        <taxon>Bacteria</taxon>
        <taxon>Pseudomonadati</taxon>
        <taxon>Pseudomonadota</taxon>
        <taxon>Gammaproteobacteria</taxon>
        <taxon>Alteromonadales</taxon>
        <taxon>Shewanellaceae</taxon>
        <taxon>Shewanella</taxon>
    </lineage>
</organism>
<comment type="function">
    <text evidence="1">Catalyzes a salvage reaction resulting in the formation of AMP, that is energically less costly than de novo synthesis.</text>
</comment>
<comment type="catalytic activity">
    <reaction evidence="1">
        <text>AMP + diphosphate = 5-phospho-alpha-D-ribose 1-diphosphate + adenine</text>
        <dbReference type="Rhea" id="RHEA:16609"/>
        <dbReference type="ChEBI" id="CHEBI:16708"/>
        <dbReference type="ChEBI" id="CHEBI:33019"/>
        <dbReference type="ChEBI" id="CHEBI:58017"/>
        <dbReference type="ChEBI" id="CHEBI:456215"/>
        <dbReference type="EC" id="2.4.2.7"/>
    </reaction>
</comment>
<comment type="pathway">
    <text evidence="1">Purine metabolism; AMP biosynthesis via salvage pathway; AMP from adenine: step 1/1.</text>
</comment>
<comment type="subunit">
    <text evidence="1">Homodimer.</text>
</comment>
<comment type="subcellular location">
    <subcellularLocation>
        <location evidence="1">Cytoplasm</location>
    </subcellularLocation>
</comment>
<comment type="similarity">
    <text evidence="1">Belongs to the purine/pyrimidine phosphoribosyltransferase family.</text>
</comment>
<reference key="1">
    <citation type="submission" date="2007-04" db="EMBL/GenBank/DDBJ databases">
        <title>Complete sequence of Shewanella putrefaciens CN-32.</title>
        <authorList>
            <consortium name="US DOE Joint Genome Institute"/>
            <person name="Copeland A."/>
            <person name="Lucas S."/>
            <person name="Lapidus A."/>
            <person name="Barry K."/>
            <person name="Detter J.C."/>
            <person name="Glavina del Rio T."/>
            <person name="Hammon N."/>
            <person name="Israni S."/>
            <person name="Dalin E."/>
            <person name="Tice H."/>
            <person name="Pitluck S."/>
            <person name="Chain P."/>
            <person name="Malfatti S."/>
            <person name="Shin M."/>
            <person name="Vergez L."/>
            <person name="Schmutz J."/>
            <person name="Larimer F."/>
            <person name="Land M."/>
            <person name="Hauser L."/>
            <person name="Kyrpides N."/>
            <person name="Mikhailova N."/>
            <person name="Romine M.F."/>
            <person name="Fredrickson J."/>
            <person name="Tiedje J."/>
            <person name="Richardson P."/>
        </authorList>
    </citation>
    <scope>NUCLEOTIDE SEQUENCE [LARGE SCALE GENOMIC DNA]</scope>
    <source>
        <strain>CN-32 / ATCC BAA-453</strain>
    </source>
</reference>
<dbReference type="EC" id="2.4.2.7" evidence="1"/>
<dbReference type="EMBL" id="CP000681">
    <property type="protein sequence ID" value="ABP76024.1"/>
    <property type="molecule type" value="Genomic_DNA"/>
</dbReference>
<dbReference type="SMR" id="A4Y7U1"/>
<dbReference type="STRING" id="319224.Sputcn32_2303"/>
<dbReference type="KEGG" id="spc:Sputcn32_2303"/>
<dbReference type="eggNOG" id="COG0503">
    <property type="taxonomic scope" value="Bacteria"/>
</dbReference>
<dbReference type="HOGENOM" id="CLU_063339_3_0_6"/>
<dbReference type="UniPathway" id="UPA00588">
    <property type="reaction ID" value="UER00646"/>
</dbReference>
<dbReference type="GO" id="GO:0005737">
    <property type="term" value="C:cytoplasm"/>
    <property type="evidence" value="ECO:0007669"/>
    <property type="project" value="UniProtKB-SubCell"/>
</dbReference>
<dbReference type="GO" id="GO:0002055">
    <property type="term" value="F:adenine binding"/>
    <property type="evidence" value="ECO:0007669"/>
    <property type="project" value="TreeGrafter"/>
</dbReference>
<dbReference type="GO" id="GO:0003999">
    <property type="term" value="F:adenine phosphoribosyltransferase activity"/>
    <property type="evidence" value="ECO:0007669"/>
    <property type="project" value="UniProtKB-UniRule"/>
</dbReference>
<dbReference type="GO" id="GO:0016208">
    <property type="term" value="F:AMP binding"/>
    <property type="evidence" value="ECO:0007669"/>
    <property type="project" value="TreeGrafter"/>
</dbReference>
<dbReference type="GO" id="GO:0006168">
    <property type="term" value="P:adenine salvage"/>
    <property type="evidence" value="ECO:0007669"/>
    <property type="project" value="InterPro"/>
</dbReference>
<dbReference type="GO" id="GO:0044209">
    <property type="term" value="P:AMP salvage"/>
    <property type="evidence" value="ECO:0007669"/>
    <property type="project" value="UniProtKB-UniRule"/>
</dbReference>
<dbReference type="GO" id="GO:0006166">
    <property type="term" value="P:purine ribonucleoside salvage"/>
    <property type="evidence" value="ECO:0007669"/>
    <property type="project" value="UniProtKB-KW"/>
</dbReference>
<dbReference type="CDD" id="cd06223">
    <property type="entry name" value="PRTases_typeI"/>
    <property type="match status" value="1"/>
</dbReference>
<dbReference type="FunFam" id="3.40.50.2020:FF:000004">
    <property type="entry name" value="Adenine phosphoribosyltransferase"/>
    <property type="match status" value="1"/>
</dbReference>
<dbReference type="Gene3D" id="3.40.50.2020">
    <property type="match status" value="1"/>
</dbReference>
<dbReference type="HAMAP" id="MF_00004">
    <property type="entry name" value="Aden_phosphoribosyltr"/>
    <property type="match status" value="1"/>
</dbReference>
<dbReference type="InterPro" id="IPR005764">
    <property type="entry name" value="Ade_phspho_trans"/>
</dbReference>
<dbReference type="InterPro" id="IPR000836">
    <property type="entry name" value="PRibTrfase_dom"/>
</dbReference>
<dbReference type="InterPro" id="IPR029057">
    <property type="entry name" value="PRTase-like"/>
</dbReference>
<dbReference type="InterPro" id="IPR050054">
    <property type="entry name" value="UPRTase/APRTase"/>
</dbReference>
<dbReference type="NCBIfam" id="TIGR01090">
    <property type="entry name" value="apt"/>
    <property type="match status" value="1"/>
</dbReference>
<dbReference type="NCBIfam" id="NF002632">
    <property type="entry name" value="PRK02304.1-1"/>
    <property type="match status" value="1"/>
</dbReference>
<dbReference type="NCBIfam" id="NF002634">
    <property type="entry name" value="PRK02304.1-3"/>
    <property type="match status" value="1"/>
</dbReference>
<dbReference type="NCBIfam" id="NF002636">
    <property type="entry name" value="PRK02304.1-5"/>
    <property type="match status" value="1"/>
</dbReference>
<dbReference type="PANTHER" id="PTHR32315">
    <property type="entry name" value="ADENINE PHOSPHORIBOSYLTRANSFERASE"/>
    <property type="match status" value="1"/>
</dbReference>
<dbReference type="PANTHER" id="PTHR32315:SF3">
    <property type="entry name" value="ADENINE PHOSPHORIBOSYLTRANSFERASE"/>
    <property type="match status" value="1"/>
</dbReference>
<dbReference type="Pfam" id="PF00156">
    <property type="entry name" value="Pribosyltran"/>
    <property type="match status" value="1"/>
</dbReference>
<dbReference type="SUPFAM" id="SSF53271">
    <property type="entry name" value="PRTase-like"/>
    <property type="match status" value="1"/>
</dbReference>
<dbReference type="PROSITE" id="PS00103">
    <property type="entry name" value="PUR_PYR_PR_TRANSFER"/>
    <property type="match status" value="1"/>
</dbReference>
<sequence>MMAMNTETLSLIKQSIKTIPNYPKEGILFRDVTSLLENAAAYKAAIDLLVEHYRGQGFTKIVGTEARGFLFGAPLALELGIGFVPVRKPGKLPRATISQSYELEYGHDSLEIHTDAISANDKVLVVDDLLATGGTIEATVKLIRQLGGEVKDAAFVISLPDLGGEARLTALGLELVKLCEFEGE</sequence>
<protein>
    <recommendedName>
        <fullName evidence="1">Adenine phosphoribosyltransferase</fullName>
        <shortName evidence="1">APRT</shortName>
        <ecNumber evidence="1">2.4.2.7</ecNumber>
    </recommendedName>
</protein>